<organism>
    <name type="scientific">Danio rerio</name>
    <name type="common">Zebrafish</name>
    <name type="synonym">Brachydanio rerio</name>
    <dbReference type="NCBI Taxonomy" id="7955"/>
    <lineage>
        <taxon>Eukaryota</taxon>
        <taxon>Metazoa</taxon>
        <taxon>Chordata</taxon>
        <taxon>Craniata</taxon>
        <taxon>Vertebrata</taxon>
        <taxon>Euteleostomi</taxon>
        <taxon>Actinopterygii</taxon>
        <taxon>Neopterygii</taxon>
        <taxon>Teleostei</taxon>
        <taxon>Ostariophysi</taxon>
        <taxon>Cypriniformes</taxon>
        <taxon>Danionidae</taxon>
        <taxon>Danioninae</taxon>
        <taxon>Danio</taxon>
    </lineage>
</organism>
<reference key="1">
    <citation type="submission" date="2007-07" db="EMBL/GenBank/DDBJ databases">
        <authorList>
            <consortium name="NIH - Zebrafish Gene Collection (ZGC) project"/>
        </authorList>
    </citation>
    <scope>NUCLEOTIDE SEQUENCE [LARGE SCALE MRNA]</scope>
    <source>
        <strain>AB</strain>
        <tissue>Gill</tissue>
    </source>
</reference>
<dbReference type="EMBL" id="BC148174">
    <property type="protein sequence ID" value="AAI48175.1"/>
    <property type="molecule type" value="mRNA"/>
</dbReference>
<dbReference type="RefSeq" id="NP_001098997.1">
    <property type="nucleotide sequence ID" value="NM_001105527.1"/>
</dbReference>
<dbReference type="FunCoup" id="A7YY07">
    <property type="interactions" value="375"/>
</dbReference>
<dbReference type="PaxDb" id="7955-ENSDARP00000068467"/>
<dbReference type="GeneID" id="797287"/>
<dbReference type="KEGG" id="dre:797287"/>
<dbReference type="AGR" id="ZFIN:ZDB-GENE-070928-25"/>
<dbReference type="CTD" id="55337"/>
<dbReference type="ZFIN" id="ZDB-GENE-070928-25">
    <property type="gene designation" value="shfl"/>
</dbReference>
<dbReference type="eggNOG" id="ENOG502QVND">
    <property type="taxonomic scope" value="Eukaryota"/>
</dbReference>
<dbReference type="InParanoid" id="A7YY07"/>
<dbReference type="OrthoDB" id="9423182at2759"/>
<dbReference type="PhylomeDB" id="A7YY07"/>
<dbReference type="PRO" id="PR:A7YY07"/>
<dbReference type="Proteomes" id="UP000000437">
    <property type="component" value="Chromosome 3"/>
</dbReference>
<dbReference type="GO" id="GO:0005737">
    <property type="term" value="C:cytoplasm"/>
    <property type="evidence" value="ECO:0000250"/>
    <property type="project" value="UniProtKB"/>
</dbReference>
<dbReference type="GO" id="GO:0005634">
    <property type="term" value="C:nucleus"/>
    <property type="evidence" value="ECO:0000250"/>
    <property type="project" value="UniProtKB"/>
</dbReference>
<dbReference type="GO" id="GO:0000932">
    <property type="term" value="C:P-body"/>
    <property type="evidence" value="ECO:0000250"/>
    <property type="project" value="UniProtKB"/>
</dbReference>
<dbReference type="GO" id="GO:0043022">
    <property type="term" value="F:ribosome binding"/>
    <property type="evidence" value="ECO:0000250"/>
    <property type="project" value="UniProtKB"/>
</dbReference>
<dbReference type="GO" id="GO:0003723">
    <property type="term" value="F:RNA binding"/>
    <property type="evidence" value="ECO:0000250"/>
    <property type="project" value="UniProtKB"/>
</dbReference>
<dbReference type="GO" id="GO:1990825">
    <property type="term" value="F:sequence-specific mRNA binding"/>
    <property type="evidence" value="ECO:0000250"/>
    <property type="project" value="UniProtKB"/>
</dbReference>
<dbReference type="GO" id="GO:0045087">
    <property type="term" value="P:innate immune response"/>
    <property type="evidence" value="ECO:0000318"/>
    <property type="project" value="GO_Central"/>
</dbReference>
<dbReference type="GO" id="GO:2001125">
    <property type="term" value="P:negative regulation of translational frameshifting"/>
    <property type="evidence" value="ECO:0000250"/>
    <property type="project" value="UniProtKB"/>
</dbReference>
<dbReference type="GO" id="GO:0006449">
    <property type="term" value="P:regulation of translational termination"/>
    <property type="evidence" value="ECO:0000250"/>
    <property type="project" value="UniProtKB"/>
</dbReference>
<dbReference type="GO" id="GO:0035456">
    <property type="term" value="P:response to interferon-beta"/>
    <property type="evidence" value="ECO:0000250"/>
    <property type="project" value="UniProtKB"/>
</dbReference>
<dbReference type="GO" id="GO:0075523">
    <property type="term" value="P:viral translational frameshifting"/>
    <property type="evidence" value="ECO:0000250"/>
    <property type="project" value="UniProtKB"/>
</dbReference>
<dbReference type="InterPro" id="IPR026795">
    <property type="entry name" value="SHFL"/>
</dbReference>
<dbReference type="PANTHER" id="PTHR16135">
    <property type="entry name" value="REPRESSOR OF YIELD OF DENV PROTEIN"/>
    <property type="match status" value="1"/>
</dbReference>
<dbReference type="PANTHER" id="PTHR16135:SF2">
    <property type="entry name" value="SHIFTLESS ANTIVIRAL INHIBITOR OF RIBOSOMAL FRAMESHIFTING PROTEIN"/>
    <property type="match status" value="1"/>
</dbReference>
<dbReference type="Pfam" id="PF15135">
    <property type="entry name" value="UPF0515"/>
    <property type="match status" value="1"/>
</dbReference>
<accession>A7YY07</accession>
<sequence>MSRMHEEVELEKSVRRLREKFHGLIEIDTAVLLMRRYVKNHRMVAMWIALMADNDRELDEEDQAALNNDPVAKNVIMKLKAEEQQQEEKHAKSSSSGSSGAGPSAKAKKQPSDDRDITELGTRLRVLPLTMENKRMFDQAQANQIPSDTHQFACESCDRDWWRRVPQRKRVSRCHRCKKKNDPVPPDRMWGIAEFTCPNCTRNFKGFGRMDGRSPCYGCRSAIYPMKILPPRRKNMMPGPKQRNQHSCFAEDCYHRMEPHVPGTECVHPHSRQKNRKPRVVYPSPAHISSGSTVNTCLSQGSLIESINELILDDIEEESEDDSDSSS</sequence>
<comment type="function">
    <text evidence="1">Inhibits programmed -1 ribosomal frameshifting (-1PRF) of a variety of mRNAs from viruses and cellular genes. Interacts with the -1PRF signal of target mRNA and translating ribosomes and causes premature translation termination at the frameshifting site. May exhibit antiviral activity.</text>
</comment>
<comment type="subcellular location">
    <subcellularLocation>
        <location evidence="1">Cytoplasm</location>
    </subcellularLocation>
    <subcellularLocation>
        <location evidence="1">Nucleus</location>
    </subcellularLocation>
    <subcellularLocation>
        <location evidence="1">Cytoplasm</location>
        <location evidence="1">P-body</location>
    </subcellularLocation>
    <text evidence="1">Predominantly found in t for dsDNA.</text>
</comment>
<comment type="similarity">
    <text evidence="3">Belongs to the SHFL family.</text>
</comment>
<proteinExistence type="evidence at transcript level"/>
<name>SHFL_DANRE</name>
<feature type="chain" id="PRO_0000318704" description="Shiftless antiviral inhibitor of ribosomal frameshifting protein homolog">
    <location>
        <begin position="1"/>
        <end position="327"/>
    </location>
</feature>
<feature type="region of interest" description="Disordered" evidence="2">
    <location>
        <begin position="82"/>
        <end position="121"/>
    </location>
</feature>
<feature type="short sequence motif" description="Nuclear localization signal" evidence="1">
    <location>
        <begin position="163"/>
        <end position="179"/>
    </location>
</feature>
<feature type="short sequence motif" description="Nuclear export signal" evidence="1">
    <location>
        <begin position="304"/>
        <end position="312"/>
    </location>
</feature>
<feature type="compositionally biased region" description="Basic and acidic residues" evidence="2">
    <location>
        <begin position="82"/>
        <end position="91"/>
    </location>
</feature>
<feature type="compositionally biased region" description="Low complexity" evidence="2">
    <location>
        <begin position="93"/>
        <end position="105"/>
    </location>
</feature>
<protein>
    <recommendedName>
        <fullName evidence="3">Shiftless antiviral inhibitor of ribosomal frameshifting protein homolog</fullName>
        <shortName>SHFL</shortName>
    </recommendedName>
    <alternativeName>
        <fullName>Repressor of yield of DENV protein homolog</fullName>
    </alternativeName>
</protein>
<keyword id="KW-0963">Cytoplasm</keyword>
<keyword id="KW-0539">Nucleus</keyword>
<keyword id="KW-1185">Reference proteome</keyword>
<keyword id="KW-0694">RNA-binding</keyword>
<evidence type="ECO:0000250" key="1">
    <source>
        <dbReference type="UniProtKB" id="Q9NUL5"/>
    </source>
</evidence>
<evidence type="ECO:0000256" key="2">
    <source>
        <dbReference type="SAM" id="MobiDB-lite"/>
    </source>
</evidence>
<evidence type="ECO:0000305" key="3"/>
<gene>
    <name type="primary">shfl</name>
    <name type="ORF">zgc:171711</name>
</gene>